<protein>
    <recommendedName>
        <fullName>High-molecular-weight cytochrome c</fullName>
    </recommendedName>
    <alternativeName>
        <fullName>Cytochrome CC3</fullName>
    </alternativeName>
</protein>
<name>HMWC_NITV2</name>
<evidence type="ECO:0000305" key="1"/>
<evidence type="ECO:0007829" key="2">
    <source>
        <dbReference type="PDB" id="1GWS"/>
    </source>
</evidence>
<evidence type="ECO:0007829" key="3">
    <source>
        <dbReference type="PDB" id="1H29"/>
    </source>
</evidence>
<evidence type="ECO:0007829" key="4">
    <source>
        <dbReference type="PDB" id="2CVC"/>
    </source>
</evidence>
<comment type="function">
    <text>HMWC (high-molecular-weight cytochrome c), ORF2, ORF3, ORF4, ORF5 and ORF6 in the HMC operon form a transmembrane protein complex that allows electron flow from the periplasmic hydrogenase to the cytoplasmic enzymes that catalyze reduction of sulfates.</text>
</comment>
<comment type="subunit">
    <text>Monomer.</text>
</comment>
<comment type="subcellular location">
    <subcellularLocation>
        <location>Periplasm</location>
    </subcellularLocation>
</comment>
<comment type="PTM">
    <text>Binds 16 heme c groups per subunit. High-spin heme 15 has single axial histidine ligand and the other hemes are low-spin bis-histidinyl coordinated.</text>
</comment>
<comment type="sequence caution" evidence="1">
    <conflict type="erroneous initiation">
        <sequence resource="EMBL-CDS" id="AAS95018"/>
    </conflict>
</comment>
<sequence>MRNGRTLLRWAGVLAATAIIGVGGFWSQGTTKALPEGPGEKRADLIEIGAMERFGKLDLPKVAFRHDQHTTAVTGMGKDCAACHKSKDGKMSLKFMRLDDNSAAELKEIYHANCIGCHTDLAKAGKKTGPQDGECRSCHNPKPSAASSWKEIGFDKSLHYRHVASKAIKPVGDPQKNCGACHHVYDEASKKLVWGKNKEDSCRACHGEKPVDKRPALDTAAHTACISCHMDVAKTKAETGPVNCAGCHAPEAQAKFKVVREVPRLDRGQPDAALILPVPGKDAPREMKGTMKPVAFDHKAHEAKANDCRTCHHVRIDTCTACHTVNGTADSKFVQLEKAMHQPDSMRSCVGCHNTRVQQPTCAGCHGFIKPTKSDAQCGVCHVAAPGFDAKQVEAGALLNLKAEQRSQVAASMLSARPQPKGTFDLNDIPEKVVIGSIAKEYQPSEFPHRKIVKTLIAGIGEDKLAATFHIEKGTLCQGCHHNSPASLTPPKCASCHGKPFDADRGDRPGLKAAYHQQCMGCHDRMKIEKPANTACVDCHKERAK</sequence>
<gene>
    <name type="primary">hmcA</name>
    <name type="synonym">hmc</name>
    <name type="ordered locus">DVU_0536</name>
</gene>
<accession>P24092</accession>
<feature type="signal peptide">
    <location>
        <begin position="1"/>
        <end position="31"/>
    </location>
</feature>
<feature type="chain" id="PRO_0000006593" description="High-molecular-weight cytochrome c">
    <location>
        <begin position="32"/>
        <end position="545"/>
    </location>
</feature>
<feature type="binding site" description="axial binding residue">
    <location>
        <position position="66"/>
    </location>
    <ligand>
        <name>heme c</name>
        <dbReference type="ChEBI" id="CHEBI:61717"/>
        <label>1</label>
    </ligand>
    <ligandPart>
        <name>Fe</name>
        <dbReference type="ChEBI" id="CHEBI:18248"/>
    </ligandPart>
</feature>
<feature type="binding site" description="axial binding residue">
    <location>
        <position position="69"/>
    </location>
    <ligand>
        <name>heme c</name>
        <dbReference type="ChEBI" id="CHEBI:61717"/>
        <label>2</label>
    </ligand>
    <ligandPart>
        <name>Fe</name>
        <dbReference type="ChEBI" id="CHEBI:18248"/>
    </ligandPart>
</feature>
<feature type="binding site" description="covalent">
    <location>
        <position position="80"/>
    </location>
    <ligand>
        <name>heme c</name>
        <dbReference type="ChEBI" id="CHEBI:61717"/>
        <label>1</label>
    </ligand>
</feature>
<feature type="binding site" description="covalent">
    <location>
        <position position="83"/>
    </location>
    <ligand>
        <name>heme c</name>
        <dbReference type="ChEBI" id="CHEBI:61717"/>
        <label>1</label>
    </ligand>
</feature>
<feature type="binding site" description="axial binding residue">
    <location>
        <position position="84"/>
    </location>
    <ligand>
        <name>heme c</name>
        <dbReference type="ChEBI" id="CHEBI:61717"/>
        <label>1</label>
    </ligand>
    <ligandPart>
        <name>Fe</name>
        <dbReference type="ChEBI" id="CHEBI:18248"/>
    </ligandPart>
</feature>
<feature type="binding site" description="axial binding residue">
    <location>
        <position position="111"/>
    </location>
    <ligand>
        <name>heme c</name>
        <dbReference type="ChEBI" id="CHEBI:61717"/>
        <label>3</label>
    </ligand>
    <ligandPart>
        <name>Fe</name>
        <dbReference type="ChEBI" id="CHEBI:18248"/>
    </ligandPart>
</feature>
<feature type="binding site" description="covalent">
    <location>
        <position position="114"/>
    </location>
    <ligand>
        <name>heme c</name>
        <dbReference type="ChEBI" id="CHEBI:61717"/>
        <label>2</label>
    </ligand>
</feature>
<feature type="binding site" description="covalent">
    <location>
        <position position="117"/>
    </location>
    <ligand>
        <name>heme c</name>
        <dbReference type="ChEBI" id="CHEBI:61717"/>
        <label>2</label>
    </ligand>
</feature>
<feature type="binding site" description="axial binding residue">
    <location>
        <position position="118"/>
    </location>
    <ligand>
        <name>heme c</name>
        <dbReference type="ChEBI" id="CHEBI:61717"/>
        <label>2</label>
    </ligand>
    <ligandPart>
        <name>Fe</name>
        <dbReference type="ChEBI" id="CHEBI:18248"/>
    </ligandPart>
</feature>
<feature type="binding site" description="covalent">
    <location>
        <position position="135"/>
    </location>
    <ligand>
        <name>heme c</name>
        <dbReference type="ChEBI" id="CHEBI:61717"/>
        <label>3</label>
    </ligand>
</feature>
<feature type="binding site" description="covalent">
    <location>
        <position position="138"/>
    </location>
    <ligand>
        <name>heme c</name>
        <dbReference type="ChEBI" id="CHEBI:61717"/>
        <label>3</label>
    </ligand>
</feature>
<feature type="binding site" description="axial binding residue">
    <location>
        <position position="139"/>
    </location>
    <ligand>
        <name>heme c</name>
        <dbReference type="ChEBI" id="CHEBI:61717"/>
        <label>3</label>
    </ligand>
    <ligandPart>
        <name>Fe</name>
        <dbReference type="ChEBI" id="CHEBI:18248"/>
    </ligandPart>
</feature>
<feature type="binding site" description="axial binding residue">
    <location>
        <position position="159"/>
    </location>
    <ligand>
        <name>heme c</name>
        <dbReference type="ChEBI" id="CHEBI:61717"/>
        <label>4</label>
    </ligand>
    <ligandPart>
        <name>Fe</name>
        <dbReference type="ChEBI" id="CHEBI:18248"/>
    </ligandPart>
</feature>
<feature type="binding site" description="axial binding residue">
    <location>
        <position position="162"/>
    </location>
    <ligand>
        <name>heme c</name>
        <dbReference type="ChEBI" id="CHEBI:61717"/>
        <label>6</label>
    </ligand>
    <ligandPart>
        <name>Fe</name>
        <dbReference type="ChEBI" id="CHEBI:18248"/>
    </ligandPart>
</feature>
<feature type="binding site" description="covalent">
    <location>
        <position position="178"/>
    </location>
    <ligand>
        <name>heme c</name>
        <dbReference type="ChEBI" id="CHEBI:61717"/>
        <label>4</label>
    </ligand>
</feature>
<feature type="binding site" description="covalent">
    <location>
        <position position="181"/>
    </location>
    <ligand>
        <name>heme c</name>
        <dbReference type="ChEBI" id="CHEBI:61717"/>
        <label>4</label>
    </ligand>
</feature>
<feature type="binding site" description="axial binding residue">
    <location>
        <position position="182"/>
    </location>
    <ligand>
        <name>heme c</name>
        <dbReference type="ChEBI" id="CHEBI:61717"/>
        <label>4</label>
    </ligand>
    <ligandPart>
        <name>Fe</name>
        <dbReference type="ChEBI" id="CHEBI:18248"/>
    </ligandPart>
</feature>
<feature type="binding site" description="axial binding residue">
    <location>
        <position position="183"/>
    </location>
    <ligand>
        <name>heme c</name>
        <dbReference type="ChEBI" id="CHEBI:61717"/>
        <label>5</label>
    </ligand>
    <ligandPart>
        <name>Fe</name>
        <dbReference type="ChEBI" id="CHEBI:18248"/>
    </ligandPart>
</feature>
<feature type="binding site" description="covalent">
    <location>
        <position position="202"/>
    </location>
    <ligand>
        <name>heme c</name>
        <dbReference type="ChEBI" id="CHEBI:61717"/>
        <label>5</label>
    </ligand>
</feature>
<feature type="binding site" description="covalent">
    <location>
        <position position="205"/>
    </location>
    <ligand>
        <name>heme c</name>
        <dbReference type="ChEBI" id="CHEBI:61717"/>
        <label>5</label>
    </ligand>
</feature>
<feature type="binding site" description="axial binding residue">
    <location>
        <position position="206"/>
    </location>
    <ligand>
        <name>heme c</name>
        <dbReference type="ChEBI" id="CHEBI:61717"/>
        <label>5</label>
    </ligand>
    <ligandPart>
        <name>Fe</name>
        <dbReference type="ChEBI" id="CHEBI:18248"/>
    </ligandPart>
</feature>
<feature type="binding site" description="axial binding residue">
    <location>
        <position position="222"/>
    </location>
    <ligand>
        <name>heme c</name>
        <dbReference type="ChEBI" id="CHEBI:61717"/>
        <label>7</label>
    </ligand>
    <ligandPart>
        <name>Fe</name>
        <dbReference type="ChEBI" id="CHEBI:18248"/>
    </ligandPart>
</feature>
<feature type="binding site" description="covalent">
    <location>
        <position position="225"/>
    </location>
    <ligand>
        <name>heme c</name>
        <dbReference type="ChEBI" id="CHEBI:61717"/>
        <label>6</label>
    </ligand>
</feature>
<feature type="binding site" description="covalent">
    <location>
        <position position="228"/>
    </location>
    <ligand>
        <name>heme c</name>
        <dbReference type="ChEBI" id="CHEBI:61717"/>
        <label>6</label>
    </ligand>
</feature>
<feature type="binding site" description="axial binding residue">
    <location>
        <position position="229"/>
    </location>
    <ligand>
        <name>heme c</name>
        <dbReference type="ChEBI" id="CHEBI:61717"/>
        <label>6</label>
    </ligand>
    <ligandPart>
        <name>Fe</name>
        <dbReference type="ChEBI" id="CHEBI:18248"/>
    </ligandPart>
</feature>
<feature type="binding site" description="covalent">
    <location>
        <position position="244"/>
    </location>
    <ligand>
        <name>heme c</name>
        <dbReference type="ChEBI" id="CHEBI:61717"/>
        <label>7</label>
    </ligand>
</feature>
<feature type="binding site" description="covalent">
    <location>
        <position position="247"/>
    </location>
    <ligand>
        <name>heme c</name>
        <dbReference type="ChEBI" id="CHEBI:61717"/>
        <label>7</label>
    </ligand>
</feature>
<feature type="binding site" description="axial binding residue">
    <location>
        <position position="248"/>
    </location>
    <ligand>
        <name>heme c</name>
        <dbReference type="ChEBI" id="CHEBI:61717"/>
        <label>7</label>
    </ligand>
    <ligandPart>
        <name>Fe</name>
        <dbReference type="ChEBI" id="CHEBI:18248"/>
    </ligandPart>
</feature>
<feature type="binding site" description="axial binding residue">
    <location>
        <position position="298"/>
    </location>
    <ligand>
        <name>heme c</name>
        <dbReference type="ChEBI" id="CHEBI:61717"/>
        <label>8</label>
    </ligand>
    <ligandPart>
        <name>Fe</name>
        <dbReference type="ChEBI" id="CHEBI:18248"/>
    </ligandPart>
</feature>
<feature type="binding site" description="axial binding residue">
    <location>
        <position position="301"/>
    </location>
    <ligand>
        <name>heme c</name>
        <dbReference type="ChEBI" id="CHEBI:61717"/>
        <label>10</label>
    </ligand>
    <ligandPart>
        <name>Fe</name>
        <dbReference type="ChEBI" id="CHEBI:18248"/>
    </ligandPart>
</feature>
<feature type="binding site" description="covalent">
    <location>
        <position position="308"/>
    </location>
    <ligand>
        <name>heme c</name>
        <dbReference type="ChEBI" id="CHEBI:61717"/>
        <label>8</label>
    </ligand>
</feature>
<feature type="binding site" description="covalent">
    <location>
        <position position="311"/>
    </location>
    <ligand>
        <name>heme c</name>
        <dbReference type="ChEBI" id="CHEBI:61717"/>
        <label>8</label>
    </ligand>
</feature>
<feature type="binding site" description="axial binding residue">
    <location>
        <position position="312"/>
    </location>
    <ligand>
        <name>heme c</name>
        <dbReference type="ChEBI" id="CHEBI:61717"/>
        <label>8</label>
    </ligand>
    <ligandPart>
        <name>Fe</name>
        <dbReference type="ChEBI" id="CHEBI:18248"/>
    </ligandPart>
</feature>
<feature type="binding site" description="axial binding residue">
    <location>
        <position position="313"/>
    </location>
    <ligand>
        <name>heme c</name>
        <dbReference type="ChEBI" id="CHEBI:61717"/>
        <label>9</label>
    </ligand>
    <ligandPart>
        <name>Fe</name>
        <dbReference type="ChEBI" id="CHEBI:18248"/>
    </ligandPart>
</feature>
<feature type="binding site" description="covalent">
    <location>
        <position position="319"/>
    </location>
    <ligand>
        <name>heme c</name>
        <dbReference type="ChEBI" id="CHEBI:61717"/>
        <label>9</label>
    </ligand>
</feature>
<feature type="binding site" description="covalent">
    <location>
        <position position="322"/>
    </location>
    <ligand>
        <name>heme c</name>
        <dbReference type="ChEBI" id="CHEBI:61717"/>
        <label>9</label>
    </ligand>
</feature>
<feature type="binding site" description="axial binding residue">
    <location>
        <position position="323"/>
    </location>
    <ligand>
        <name>heme c</name>
        <dbReference type="ChEBI" id="CHEBI:61717"/>
        <label>9</label>
    </ligand>
    <ligandPart>
        <name>Fe</name>
        <dbReference type="ChEBI" id="CHEBI:18248"/>
    </ligandPart>
</feature>
<feature type="binding site" description="axial binding residue">
    <location>
        <position position="341"/>
    </location>
    <ligand>
        <name>heme c</name>
        <dbReference type="ChEBI" id="CHEBI:61717"/>
        <label>12</label>
    </ligand>
    <ligandPart>
        <name>Fe</name>
        <dbReference type="ChEBI" id="CHEBI:18248"/>
    </ligandPart>
</feature>
<feature type="binding site" description="covalent">
    <location>
        <position position="349"/>
    </location>
    <ligand>
        <name>heme c</name>
        <dbReference type="ChEBI" id="CHEBI:61717"/>
        <label>10</label>
    </ligand>
</feature>
<feature type="binding site" description="covalent">
    <location>
        <position position="352"/>
    </location>
    <ligand>
        <name>heme c</name>
        <dbReference type="ChEBI" id="CHEBI:61717"/>
        <label>10</label>
    </ligand>
</feature>
<feature type="binding site" description="axial binding residue">
    <location>
        <position position="353"/>
    </location>
    <ligand>
        <name>heme c</name>
        <dbReference type="ChEBI" id="CHEBI:61717"/>
        <label>10</label>
    </ligand>
    <ligandPart>
        <name>Fe</name>
        <dbReference type="ChEBI" id="CHEBI:18248"/>
    </ligandPart>
</feature>
<feature type="binding site" description="covalent">
    <location>
        <position position="362"/>
    </location>
    <ligand>
        <name>heme c</name>
        <dbReference type="ChEBI" id="CHEBI:61717"/>
        <label>11</label>
    </ligand>
</feature>
<feature type="binding site" description="covalent">
    <location>
        <position position="365"/>
    </location>
    <ligand>
        <name>heme c</name>
        <dbReference type="ChEBI" id="CHEBI:61717"/>
        <label>11</label>
    </ligand>
</feature>
<feature type="binding site" description="axial binding residue">
    <location>
        <position position="366"/>
    </location>
    <ligand>
        <name>heme c</name>
        <dbReference type="ChEBI" id="CHEBI:61717"/>
        <label>11</label>
    </ligand>
    <ligandPart>
        <name>Fe</name>
        <dbReference type="ChEBI" id="CHEBI:18248"/>
    </ligandPart>
</feature>
<feature type="binding site" description="covalent">
    <location>
        <position position="378"/>
    </location>
    <ligand>
        <name>heme c</name>
        <dbReference type="ChEBI" id="CHEBI:61717"/>
        <label>12</label>
    </ligand>
</feature>
<feature type="binding site" description="covalent">
    <location>
        <position position="381"/>
    </location>
    <ligand>
        <name>heme c</name>
        <dbReference type="ChEBI" id="CHEBI:61717"/>
        <label>12</label>
    </ligand>
</feature>
<feature type="binding site" description="axial binding residue">
    <location>
        <position position="382"/>
    </location>
    <ligand>
        <name>heme c</name>
        <dbReference type="ChEBI" id="CHEBI:61717"/>
        <label>12</label>
    </ligand>
    <ligandPart>
        <name>Fe</name>
        <dbReference type="ChEBI" id="CHEBI:18248"/>
    </ligandPart>
</feature>
<feature type="binding site" description="axial binding residue">
    <location>
        <position position="449"/>
    </location>
    <ligand>
        <name>heme c</name>
        <dbReference type="ChEBI" id="CHEBI:61717"/>
        <label>13</label>
    </ligand>
    <ligandPart>
        <name>Fe</name>
        <dbReference type="ChEBI" id="CHEBI:18248"/>
    </ligandPart>
</feature>
<feature type="binding site" description="axial binding residue">
    <location>
        <position position="470"/>
    </location>
    <ligand>
        <name>heme c</name>
        <dbReference type="ChEBI" id="CHEBI:61717"/>
        <label>11</label>
    </ligand>
    <ligandPart>
        <name>Fe</name>
        <dbReference type="ChEBI" id="CHEBI:18248"/>
    </ligandPart>
</feature>
<feature type="binding site" description="covalent">
    <location>
        <position position="477"/>
    </location>
    <ligand>
        <name>heme c</name>
        <dbReference type="ChEBI" id="CHEBI:61717"/>
        <label>13</label>
    </ligand>
</feature>
<feature type="binding site" description="covalent">
    <location>
        <position position="480"/>
    </location>
    <ligand>
        <name>heme c</name>
        <dbReference type="ChEBI" id="CHEBI:61717"/>
        <label>13</label>
    </ligand>
</feature>
<feature type="binding site" description="axial binding residue">
    <location>
        <position position="481"/>
    </location>
    <ligand>
        <name>heme c</name>
        <dbReference type="ChEBI" id="CHEBI:61717"/>
        <label>13</label>
    </ligand>
    <ligandPart>
        <name>Fe</name>
        <dbReference type="ChEBI" id="CHEBI:18248"/>
    </ligandPart>
</feature>
<feature type="binding site" description="axial binding residue">
    <location>
        <position position="482"/>
    </location>
    <ligand>
        <name>heme c</name>
        <dbReference type="ChEBI" id="CHEBI:61717"/>
        <label>14</label>
    </ligand>
    <ligandPart>
        <name>Fe</name>
        <dbReference type="ChEBI" id="CHEBI:18248"/>
    </ligandPart>
</feature>
<feature type="binding site" description="covalent">
    <location>
        <position position="493"/>
    </location>
    <ligand>
        <name>heme c</name>
        <dbReference type="ChEBI" id="CHEBI:61717"/>
        <label>14</label>
    </ligand>
</feature>
<feature type="binding site" description="covalent">
    <location>
        <position position="496"/>
    </location>
    <ligand>
        <name>heme c</name>
        <dbReference type="ChEBI" id="CHEBI:61717"/>
        <label>14</label>
    </ligand>
</feature>
<feature type="binding site" description="axial binding residue">
    <location>
        <position position="497"/>
    </location>
    <ligand>
        <name>heme c</name>
        <dbReference type="ChEBI" id="CHEBI:61717"/>
        <label>14</label>
    </ligand>
    <ligandPart>
        <name>Fe</name>
        <dbReference type="ChEBI" id="CHEBI:18248"/>
    </ligandPart>
</feature>
<feature type="binding site" description="axial binding residue">
    <location>
        <position position="516"/>
    </location>
    <ligand>
        <name>heme c</name>
        <dbReference type="ChEBI" id="CHEBI:61717"/>
        <label>16</label>
    </ligand>
    <ligandPart>
        <name>Fe</name>
        <dbReference type="ChEBI" id="CHEBI:18248"/>
    </ligandPart>
</feature>
<feature type="binding site" description="covalent">
    <location>
        <position position="519"/>
    </location>
    <ligand>
        <name>heme c</name>
        <dbReference type="ChEBI" id="CHEBI:61717"/>
        <label>15</label>
    </ligand>
</feature>
<feature type="binding site" description="covalent">
    <location>
        <position position="522"/>
    </location>
    <ligand>
        <name>heme c</name>
        <dbReference type="ChEBI" id="CHEBI:61717"/>
        <label>15</label>
    </ligand>
</feature>
<feature type="binding site" description="axial binding residue">
    <location>
        <position position="523"/>
    </location>
    <ligand>
        <name>heme c</name>
        <dbReference type="ChEBI" id="CHEBI:61717"/>
        <label>15</label>
    </ligand>
    <ligandPart>
        <name>Fe</name>
        <dbReference type="ChEBI" id="CHEBI:18248"/>
    </ligandPart>
</feature>
<feature type="binding site" description="covalent">
    <location>
        <position position="536"/>
    </location>
    <ligand>
        <name>heme c</name>
        <dbReference type="ChEBI" id="CHEBI:61717"/>
        <label>16</label>
    </ligand>
</feature>
<feature type="binding site" description="covalent">
    <location>
        <position position="539"/>
    </location>
    <ligand>
        <name>heme c</name>
        <dbReference type="ChEBI" id="CHEBI:61717"/>
        <label>16</label>
    </ligand>
</feature>
<feature type="binding site" description="axial binding residue">
    <location>
        <position position="540"/>
    </location>
    <ligand>
        <name>heme c</name>
        <dbReference type="ChEBI" id="CHEBI:61717"/>
        <label>16</label>
    </ligand>
    <ligandPart>
        <name>Fe</name>
        <dbReference type="ChEBI" id="CHEBI:18248"/>
    </ligandPart>
</feature>
<feature type="strand" evidence="4">
    <location>
        <begin position="41"/>
        <end position="43"/>
    </location>
</feature>
<feature type="strand" evidence="4">
    <location>
        <begin position="45"/>
        <end position="48"/>
    </location>
</feature>
<feature type="helix" evidence="4">
    <location>
        <begin position="50"/>
        <end position="54"/>
    </location>
</feature>
<feature type="strand" evidence="4">
    <location>
        <begin position="62"/>
        <end position="65"/>
    </location>
</feature>
<feature type="helix" evidence="4">
    <location>
        <begin position="66"/>
        <end position="75"/>
    </location>
</feature>
<feature type="helix" evidence="4">
    <location>
        <begin position="80"/>
        <end position="82"/>
    </location>
</feature>
<feature type="strand" evidence="4">
    <location>
        <begin position="93"/>
        <end position="96"/>
    </location>
</feature>
<feature type="helix" evidence="4">
    <location>
        <begin position="103"/>
        <end position="123"/>
    </location>
</feature>
<feature type="helix" evidence="4">
    <location>
        <begin position="135"/>
        <end position="138"/>
    </location>
</feature>
<feature type="strand" evidence="4">
    <location>
        <begin position="144"/>
        <end position="147"/>
    </location>
</feature>
<feature type="helix" evidence="4">
    <location>
        <begin position="156"/>
        <end position="163"/>
    </location>
</feature>
<feature type="strand" evidence="4">
    <location>
        <begin position="172"/>
        <end position="175"/>
    </location>
</feature>
<feature type="helix" evidence="4">
    <location>
        <begin position="178"/>
        <end position="180"/>
    </location>
</feature>
<feature type="strand" evidence="4">
    <location>
        <begin position="184"/>
        <end position="186"/>
    </location>
</feature>
<feature type="turn" evidence="4">
    <location>
        <begin position="187"/>
        <end position="190"/>
    </location>
</feature>
<feature type="strand" evidence="4">
    <location>
        <begin position="191"/>
        <end position="193"/>
    </location>
</feature>
<feature type="helix" evidence="4">
    <location>
        <begin position="202"/>
        <end position="204"/>
    </location>
</feature>
<feature type="helix" evidence="4">
    <location>
        <begin position="217"/>
        <end position="234"/>
    </location>
</feature>
<feature type="helix" evidence="4">
    <location>
        <begin position="244"/>
        <end position="248"/>
    </location>
</feature>
<feature type="helix" evidence="4">
    <location>
        <begin position="250"/>
        <end position="253"/>
    </location>
</feature>
<feature type="strand" evidence="4">
    <location>
        <begin position="271"/>
        <end position="275"/>
    </location>
</feature>
<feature type="strand" evidence="4">
    <location>
        <begin position="281"/>
        <end position="285"/>
    </location>
</feature>
<feature type="strand" evidence="4">
    <location>
        <begin position="294"/>
        <end position="297"/>
    </location>
</feature>
<feature type="helix" evidence="4">
    <location>
        <begin position="298"/>
        <end position="304"/>
    </location>
</feature>
<feature type="turn" evidence="4">
    <location>
        <begin position="309"/>
        <end position="311"/>
    </location>
</feature>
<feature type="strand" evidence="4">
    <location>
        <begin position="312"/>
        <end position="314"/>
    </location>
</feature>
<feature type="turn" evidence="4">
    <location>
        <begin position="320"/>
        <end position="322"/>
    </location>
</feature>
<feature type="helix" evidence="4">
    <location>
        <begin position="329"/>
        <end position="331"/>
    </location>
</feature>
<feature type="helix" evidence="4">
    <location>
        <begin position="336"/>
        <end position="341"/>
    </location>
</feature>
<feature type="strand" evidence="2">
    <location>
        <begin position="346"/>
        <end position="348"/>
    </location>
</feature>
<feature type="helix" evidence="4">
    <location>
        <begin position="349"/>
        <end position="356"/>
    </location>
</feature>
<feature type="helix" evidence="4">
    <location>
        <begin position="360"/>
        <end position="366"/>
    </location>
</feature>
<feature type="helix" evidence="4">
    <location>
        <begin position="375"/>
        <end position="378"/>
    </location>
</feature>
<feature type="turn" evidence="4">
    <location>
        <begin position="379"/>
        <end position="381"/>
    </location>
</feature>
<feature type="strand" evidence="3">
    <location>
        <begin position="386"/>
        <end position="388"/>
    </location>
</feature>
<feature type="helix" evidence="4">
    <location>
        <begin position="390"/>
        <end position="393"/>
    </location>
</feature>
<feature type="turn" evidence="4">
    <location>
        <begin position="394"/>
        <end position="400"/>
    </location>
</feature>
<feature type="helix" evidence="4">
    <location>
        <begin position="403"/>
        <end position="416"/>
    </location>
</feature>
<feature type="helix" evidence="4">
    <location>
        <begin position="426"/>
        <end position="428"/>
    </location>
</feature>
<feature type="strand" evidence="4">
    <location>
        <begin position="433"/>
        <end position="435"/>
    </location>
</feature>
<feature type="strand" evidence="4">
    <location>
        <begin position="440"/>
        <end position="442"/>
    </location>
</feature>
<feature type="strand" evidence="4">
    <location>
        <begin position="445"/>
        <end position="447"/>
    </location>
</feature>
<feature type="helix" evidence="4">
    <location>
        <begin position="449"/>
        <end position="460"/>
    </location>
</feature>
<feature type="helix" evidence="4">
    <location>
        <begin position="464"/>
        <end position="469"/>
    </location>
</feature>
<feature type="turn" evidence="4">
    <location>
        <begin position="473"/>
        <end position="475"/>
    </location>
</feature>
<feature type="helix" evidence="4">
    <location>
        <begin position="476"/>
        <end position="479"/>
    </location>
</feature>
<feature type="helix" evidence="4">
    <location>
        <begin position="493"/>
        <end position="495"/>
    </location>
</feature>
<feature type="helix" evidence="4">
    <location>
        <begin position="511"/>
        <end position="526"/>
    </location>
</feature>
<feature type="strand" evidence="4">
    <location>
        <begin position="538"/>
        <end position="540"/>
    </location>
</feature>
<reference key="1">
    <citation type="journal article" date="1991" name="J. Bacteriol.">
        <title>Cloning, sequencing, and expression of the gene encoding the high-molecular-weight cytochrome c from Desulfovibrio vulgaris Hildenborough.</title>
        <authorList>
            <person name="Pollock W.B.R."/>
            <person name="Loutfi M."/>
            <person name="Bruschi M."/>
            <person name="Rapp-Giles B.J."/>
            <person name="Wall J.D."/>
            <person name="Voordouw G."/>
        </authorList>
    </citation>
    <scope>NUCLEOTIDE SEQUENCE [GENOMIC DNA]</scope>
    <scope>PARTIAL PROTEIN SEQUENCE</scope>
</reference>
<reference key="2">
    <citation type="journal article" date="2004" name="Nat. Biotechnol.">
        <title>The genome sequence of the anaerobic, sulfate-reducing bacterium Desulfovibrio vulgaris Hildenborough.</title>
        <authorList>
            <person name="Heidelberg J.F."/>
            <person name="Seshadri R."/>
            <person name="Haveman S.A."/>
            <person name="Hemme C.L."/>
            <person name="Paulsen I.T."/>
            <person name="Kolonay J.F."/>
            <person name="Eisen J.A."/>
            <person name="Ward N.L."/>
            <person name="Methe B.A."/>
            <person name="Brinkac L.M."/>
            <person name="Daugherty S.C."/>
            <person name="DeBoy R.T."/>
            <person name="Dodson R.J."/>
            <person name="Durkin A.S."/>
            <person name="Madupu R."/>
            <person name="Nelson W.C."/>
            <person name="Sullivan S.A."/>
            <person name="Fouts D.E."/>
            <person name="Haft D.H."/>
            <person name="Selengut J."/>
            <person name="Peterson J.D."/>
            <person name="Davidsen T.M."/>
            <person name="Zafar N."/>
            <person name="Zhou L."/>
            <person name="Radune D."/>
            <person name="Dimitrov G."/>
            <person name="Hance M."/>
            <person name="Tran K."/>
            <person name="Khouri H.M."/>
            <person name="Gill J."/>
            <person name="Utterback T.R."/>
            <person name="Feldblyum T.V."/>
            <person name="Wall J.D."/>
            <person name="Voordouw G."/>
            <person name="Fraser C.M."/>
        </authorList>
    </citation>
    <scope>NUCLEOTIDE SEQUENCE [LARGE SCALE GENOMIC DNA]</scope>
    <source>
        <strain>ATCC 29579 / DSM 644 / CCUG 34227 / NCIMB 8303 / VKM B-1760 / Hildenborough</strain>
    </source>
</reference>
<reference key="3">
    <citation type="journal article" date="1990" name="Biochemistry">
        <title>Coordination and redox properties of a novel triheme cytochrome from Desulfovibrio vulgaris (Hildenborough).</title>
        <authorList>
            <person name="Tan J.A."/>
            <person name="Cowan J.A."/>
        </authorList>
    </citation>
    <scope>EPR SPECTROSCOPY</scope>
    <scope>REDOX POTENTIOMETRY OF HEMES</scope>
</reference>
<reference key="4">
    <citation type="journal article" date="1992" name="Biochemistry">
        <title>Biochemical and spectroscopic characterization of the high molecular weight cytochrome c from Desulfovibrio vulgaris Hildenborough expressed in Desulfovibrio desulfuricans G200.</title>
        <authorList>
            <person name="Bruschi M."/>
            <person name="Bertrand P."/>
            <person name="More C."/>
            <person name="Leroy G."/>
            <person name="Bonicel J."/>
            <person name="Haladjian J."/>
            <person name="Chottard G."/>
            <person name="Pollock W.B.R."/>
            <person name="Voordouw G."/>
        </authorList>
    </citation>
    <scope>EPR SPECTROSCOPY</scope>
    <scope>REDOX POTENTIOMETRY OF HEMES</scope>
</reference>
<reference key="5">
    <citation type="journal article" date="1993" name="J. Bacteriol.">
        <title>The hmc operon of Desulfovibrio vulgaris subsp. vulgaris Hildenborough encodes a potential transmembrane redox protein complex.</title>
        <authorList>
            <person name="Rossi M."/>
            <person name="Pollock W.B.R."/>
            <person name="Reij M.W."/>
            <person name="Keon R.G."/>
            <person name="Fu R."/>
            <person name="Voordouw G."/>
        </authorList>
    </citation>
    <scope>DOMAIN STRUCTURE</scope>
</reference>
<reference key="6">
    <citation type="journal article" date="1994" name="Eur. J. Biochem.">
        <title>Axial coordination and reduction potentials of the sixteen hemes in high-molecular-mass cytochrome c from Desulfovibrio vulgaris (Hildenborough).</title>
        <authorList>
            <person name="Verhagen M.F.J.M."/>
            <person name="Pierik A.J."/>
            <person name="Wolbert R.B.G."/>
            <person name="Mallee L.F."/>
            <person name="Voorhorst W.G.B."/>
            <person name="Hagen W.R."/>
        </authorList>
    </citation>
    <scope>EPR SPECTROSCOPY</scope>
    <scope>REDOX POTENTIOMETRY OF HEMES</scope>
</reference>
<reference key="7">
    <citation type="journal article" date="2002" name="J. Biol. Chem.">
        <title>Sulfate respiration in Desulfovibrio vulgaris Hildenborough. Structure of the 16-heme cytochrome c HmcA at 2.5-A resolution and a view of its role in transmembrane electron transfer.</title>
        <authorList>
            <person name="Matias P.M."/>
            <person name="Coelho A.V."/>
            <person name="Valente F.M.A."/>
            <person name="Placido D."/>
            <person name="LeGall J."/>
            <person name="Xavier A.V."/>
            <person name="Pereira I.A.C."/>
            <person name="Carrondo M.A."/>
        </authorList>
    </citation>
    <scope>X-RAY CRYSTALLOGRAPHY (2.51 ANGSTROMS)</scope>
</reference>
<dbReference type="EMBL" id="M63807">
    <property type="protein sequence ID" value="AAA23355.1"/>
    <property type="molecule type" value="Genomic_DNA"/>
</dbReference>
<dbReference type="EMBL" id="AE017285">
    <property type="protein sequence ID" value="AAS95018.1"/>
    <property type="status" value="ALT_INIT"/>
    <property type="molecule type" value="Genomic_DNA"/>
</dbReference>
<dbReference type="PIR" id="A39193">
    <property type="entry name" value="A39193"/>
</dbReference>
<dbReference type="RefSeq" id="WP_014524248.1">
    <property type="nucleotide sequence ID" value="NC_002937.3"/>
</dbReference>
<dbReference type="RefSeq" id="YP_009759.1">
    <property type="nucleotide sequence ID" value="NC_002937.3"/>
</dbReference>
<dbReference type="PDB" id="1GWS">
    <property type="method" value="X-ray"/>
    <property type="resolution" value="2.42 A"/>
    <property type="chains" value="A=1-545"/>
</dbReference>
<dbReference type="PDB" id="1H29">
    <property type="method" value="X-ray"/>
    <property type="resolution" value="2.51 A"/>
    <property type="chains" value="A/B/C/D=32-545"/>
</dbReference>
<dbReference type="PDB" id="2CVC">
    <property type="method" value="X-ray"/>
    <property type="resolution" value="2.00 A"/>
    <property type="chains" value="A=1-545"/>
</dbReference>
<dbReference type="PDBsum" id="1GWS"/>
<dbReference type="PDBsum" id="1H29"/>
<dbReference type="PDBsum" id="2CVC"/>
<dbReference type="SMR" id="P24092"/>
<dbReference type="STRING" id="882.DVU_0536"/>
<dbReference type="DrugBank" id="DB03317">
    <property type="generic name" value="Ferroheme C"/>
</dbReference>
<dbReference type="TCDB" id="5.B.13.1.1">
    <property type="family name" value="the one electron transmembrane transfer complex (hmcabcdef) family"/>
</dbReference>
<dbReference type="PaxDb" id="882-DVU_0536"/>
<dbReference type="EnsemblBacteria" id="AAS95018">
    <property type="protein sequence ID" value="AAS95018"/>
    <property type="gene ID" value="DVU_0536"/>
</dbReference>
<dbReference type="KEGG" id="dvu:DVU_0536"/>
<dbReference type="PATRIC" id="fig|882.5.peg.512"/>
<dbReference type="eggNOG" id="COG0484">
    <property type="taxonomic scope" value="Bacteria"/>
</dbReference>
<dbReference type="HOGENOM" id="CLU_508744_0_0_7"/>
<dbReference type="OrthoDB" id="5427780at2"/>
<dbReference type="BioCyc" id="MetaCyc:MONOMER-22162"/>
<dbReference type="EvolutionaryTrace" id="P24092"/>
<dbReference type="Proteomes" id="UP000002194">
    <property type="component" value="Chromosome"/>
</dbReference>
<dbReference type="GO" id="GO:0042597">
    <property type="term" value="C:periplasmic space"/>
    <property type="evidence" value="ECO:0007669"/>
    <property type="project" value="UniProtKB-SubCell"/>
</dbReference>
<dbReference type="GO" id="GO:0009055">
    <property type="term" value="F:electron transfer activity"/>
    <property type="evidence" value="ECO:0007669"/>
    <property type="project" value="InterPro"/>
</dbReference>
<dbReference type="GO" id="GO:0020037">
    <property type="term" value="F:heme binding"/>
    <property type="evidence" value="ECO:0007669"/>
    <property type="project" value="InterPro"/>
</dbReference>
<dbReference type="GO" id="GO:0046872">
    <property type="term" value="F:metal ion binding"/>
    <property type="evidence" value="ECO:0007669"/>
    <property type="project" value="UniProtKB-KW"/>
</dbReference>
<dbReference type="CDD" id="cd08168">
    <property type="entry name" value="Cytochrom_C3"/>
    <property type="match status" value="4"/>
</dbReference>
<dbReference type="Gene3D" id="3.90.10.10">
    <property type="entry name" value="Cytochrome C3"/>
    <property type="match status" value="4"/>
</dbReference>
<dbReference type="InterPro" id="IPR002322">
    <property type="entry name" value="Cyt_c_III"/>
</dbReference>
<dbReference type="InterPro" id="IPR020942">
    <property type="entry name" value="Cyt_c_III_dom"/>
</dbReference>
<dbReference type="InterPro" id="IPR011346">
    <property type="entry name" value="Cyt_cc3"/>
</dbReference>
<dbReference type="InterPro" id="IPR054813">
    <property type="entry name" value="HmcA"/>
</dbReference>
<dbReference type="InterPro" id="IPR036280">
    <property type="entry name" value="Multihaem_cyt_sf"/>
</dbReference>
<dbReference type="InterPro" id="IPR051829">
    <property type="entry name" value="Multiheme_Cytochr_ET"/>
</dbReference>
<dbReference type="NCBIfam" id="NF045713">
    <property type="entry name" value="CxxCH_16_HmcA"/>
    <property type="match status" value="1"/>
</dbReference>
<dbReference type="PANTHER" id="PTHR35038">
    <property type="entry name" value="DISSIMILATORY SULFITE REDUCTASE SIRA"/>
    <property type="match status" value="1"/>
</dbReference>
<dbReference type="PANTHER" id="PTHR35038:SF10">
    <property type="entry name" value="HIGH-MOLECULAR-WEIGHT CYTOCHROME C"/>
    <property type="match status" value="1"/>
</dbReference>
<dbReference type="Pfam" id="PF02085">
    <property type="entry name" value="Cytochrom_CIII"/>
    <property type="match status" value="4"/>
</dbReference>
<dbReference type="PIRSF" id="PIRSF000026">
    <property type="entry name" value="Cytochrome_cc3"/>
    <property type="match status" value="1"/>
</dbReference>
<dbReference type="PRINTS" id="PR00609">
    <property type="entry name" value="CYTOCHROMEC3"/>
</dbReference>
<dbReference type="SUPFAM" id="SSF48695">
    <property type="entry name" value="Multiheme cytochromes"/>
    <property type="match status" value="1"/>
</dbReference>
<dbReference type="PROSITE" id="PS51008">
    <property type="entry name" value="MULTIHEME_CYTC"/>
    <property type="match status" value="1"/>
</dbReference>
<organism>
    <name type="scientific">Nitratidesulfovibrio vulgaris (strain ATCC 29579 / DSM 644 / CCUG 34227 / NCIMB 8303 / VKM B-1760 / Hildenborough)</name>
    <name type="common">Desulfovibrio vulgaris</name>
    <dbReference type="NCBI Taxonomy" id="882"/>
    <lineage>
        <taxon>Bacteria</taxon>
        <taxon>Pseudomonadati</taxon>
        <taxon>Thermodesulfobacteriota</taxon>
        <taxon>Desulfovibrionia</taxon>
        <taxon>Desulfovibrionales</taxon>
        <taxon>Desulfovibrionaceae</taxon>
        <taxon>Nitratidesulfovibrio</taxon>
    </lineage>
</organism>
<keyword id="KW-0002">3D-structure</keyword>
<keyword id="KW-0903">Direct protein sequencing</keyword>
<keyword id="KW-0249">Electron transport</keyword>
<keyword id="KW-0349">Heme</keyword>
<keyword id="KW-0408">Iron</keyword>
<keyword id="KW-0479">Metal-binding</keyword>
<keyword id="KW-0574">Periplasm</keyword>
<keyword id="KW-1185">Reference proteome</keyword>
<keyword id="KW-0677">Repeat</keyword>
<keyword id="KW-0732">Signal</keyword>
<keyword id="KW-0813">Transport</keyword>
<proteinExistence type="evidence at protein level"/>